<keyword id="KW-0021">Allosteric enzyme</keyword>
<keyword id="KW-0328">Glycosyltransferase</keyword>
<keyword id="KW-0342">GTP-binding</keyword>
<keyword id="KW-0460">Magnesium</keyword>
<keyword id="KW-0547">Nucleotide-binding</keyword>
<keyword id="KW-1185">Reference proteome</keyword>
<keyword id="KW-0808">Transferase</keyword>
<name>UPP_LACDA</name>
<dbReference type="EC" id="2.4.2.9" evidence="1"/>
<dbReference type="EMBL" id="CR954253">
    <property type="protein sequence ID" value="CAI97531.1"/>
    <property type="molecule type" value="Genomic_DNA"/>
</dbReference>
<dbReference type="RefSeq" id="WP_002880062.1">
    <property type="nucleotide sequence ID" value="NZ_JQAV01000001.1"/>
</dbReference>
<dbReference type="SMR" id="Q1GAX2"/>
<dbReference type="STRING" id="390333.Ldb0704"/>
<dbReference type="GeneID" id="69668683"/>
<dbReference type="KEGG" id="ldb:Ldb0704"/>
<dbReference type="eggNOG" id="COG0035">
    <property type="taxonomic scope" value="Bacteria"/>
</dbReference>
<dbReference type="HOGENOM" id="CLU_067096_2_2_9"/>
<dbReference type="BioCyc" id="LDEL390333:LDB_RS03060-MONOMER"/>
<dbReference type="UniPathway" id="UPA00574">
    <property type="reaction ID" value="UER00636"/>
</dbReference>
<dbReference type="Proteomes" id="UP000001259">
    <property type="component" value="Chromosome"/>
</dbReference>
<dbReference type="GO" id="GO:0005525">
    <property type="term" value="F:GTP binding"/>
    <property type="evidence" value="ECO:0007669"/>
    <property type="project" value="UniProtKB-KW"/>
</dbReference>
<dbReference type="GO" id="GO:0000287">
    <property type="term" value="F:magnesium ion binding"/>
    <property type="evidence" value="ECO:0007669"/>
    <property type="project" value="UniProtKB-UniRule"/>
</dbReference>
<dbReference type="GO" id="GO:0004845">
    <property type="term" value="F:uracil phosphoribosyltransferase activity"/>
    <property type="evidence" value="ECO:0007669"/>
    <property type="project" value="UniProtKB-UniRule"/>
</dbReference>
<dbReference type="GO" id="GO:0044206">
    <property type="term" value="P:UMP salvage"/>
    <property type="evidence" value="ECO:0007669"/>
    <property type="project" value="UniProtKB-UniRule"/>
</dbReference>
<dbReference type="GO" id="GO:0006223">
    <property type="term" value="P:uracil salvage"/>
    <property type="evidence" value="ECO:0007669"/>
    <property type="project" value="InterPro"/>
</dbReference>
<dbReference type="CDD" id="cd06223">
    <property type="entry name" value="PRTases_typeI"/>
    <property type="match status" value="1"/>
</dbReference>
<dbReference type="FunFam" id="3.40.50.2020:FF:000003">
    <property type="entry name" value="Uracil phosphoribosyltransferase"/>
    <property type="match status" value="1"/>
</dbReference>
<dbReference type="Gene3D" id="3.40.50.2020">
    <property type="match status" value="1"/>
</dbReference>
<dbReference type="HAMAP" id="MF_01218_B">
    <property type="entry name" value="Upp_B"/>
    <property type="match status" value="1"/>
</dbReference>
<dbReference type="InterPro" id="IPR000836">
    <property type="entry name" value="PRibTrfase_dom"/>
</dbReference>
<dbReference type="InterPro" id="IPR029057">
    <property type="entry name" value="PRTase-like"/>
</dbReference>
<dbReference type="InterPro" id="IPR034332">
    <property type="entry name" value="Upp_B"/>
</dbReference>
<dbReference type="InterPro" id="IPR050054">
    <property type="entry name" value="UPRTase/APRTase"/>
</dbReference>
<dbReference type="InterPro" id="IPR005765">
    <property type="entry name" value="Ura_phspho_trans"/>
</dbReference>
<dbReference type="NCBIfam" id="NF001097">
    <property type="entry name" value="PRK00129.1"/>
    <property type="match status" value="1"/>
</dbReference>
<dbReference type="NCBIfam" id="TIGR01091">
    <property type="entry name" value="upp"/>
    <property type="match status" value="1"/>
</dbReference>
<dbReference type="PANTHER" id="PTHR32315">
    <property type="entry name" value="ADENINE PHOSPHORIBOSYLTRANSFERASE"/>
    <property type="match status" value="1"/>
</dbReference>
<dbReference type="PANTHER" id="PTHR32315:SF4">
    <property type="entry name" value="URACIL PHOSPHORIBOSYLTRANSFERASE, CHLOROPLASTIC"/>
    <property type="match status" value="1"/>
</dbReference>
<dbReference type="Pfam" id="PF14681">
    <property type="entry name" value="UPRTase"/>
    <property type="match status" value="1"/>
</dbReference>
<dbReference type="SUPFAM" id="SSF53271">
    <property type="entry name" value="PRTase-like"/>
    <property type="match status" value="1"/>
</dbReference>
<sequence length="209" mass="22842">MGKFTVLNHPLIQHKLTIIRRKETGSNEFRRIVGEIAGLMTYEITRDLPLQDVEIETPMGKTVQKELAGKKLTIVPILRAGMGMVNGVLEMIPSAKVGVVGMYRDEETLKPVEYFFKVPKDVTERECLVVDPMLATGGSANLAIEALKKRGVTDIKLAVLVAAPEGVKAVQDEHPDVDIYAAALDDKLLPNGYIFPGLGDAGDRIFGTK</sequence>
<gene>
    <name evidence="1" type="primary">upp</name>
    <name type="ordered locus">Ldb0704</name>
</gene>
<reference key="1">
    <citation type="journal article" date="2006" name="Proc. Natl. Acad. Sci. U.S.A.">
        <title>The complete genome sequence of Lactobacillus bulgaricus reveals extensive and ongoing reductive evolution.</title>
        <authorList>
            <person name="van de Guchte M."/>
            <person name="Penaud S."/>
            <person name="Grimaldi C."/>
            <person name="Barbe V."/>
            <person name="Bryson K."/>
            <person name="Nicolas P."/>
            <person name="Robert C."/>
            <person name="Oztas S."/>
            <person name="Mangenot S."/>
            <person name="Couloux A."/>
            <person name="Loux V."/>
            <person name="Dervyn R."/>
            <person name="Bossy R."/>
            <person name="Bolotin A."/>
            <person name="Batto J.-M."/>
            <person name="Walunas T."/>
            <person name="Gibrat J.-F."/>
            <person name="Bessieres P."/>
            <person name="Weissenbach J."/>
            <person name="Ehrlich S.D."/>
            <person name="Maguin E."/>
        </authorList>
    </citation>
    <scope>NUCLEOTIDE SEQUENCE [LARGE SCALE GENOMIC DNA]</scope>
    <source>
        <strain>ATCC 11842 / DSM 20081 / BCRC 10696 / JCM 1002 / NBRC 13953 / NCIMB 11778 / NCTC 12712 / WDCM 00102 / Lb 14</strain>
    </source>
</reference>
<accession>Q1GAX2</accession>
<feature type="chain" id="PRO_1000053730" description="Uracil phosphoribosyltransferase">
    <location>
        <begin position="1"/>
        <end position="209"/>
    </location>
</feature>
<feature type="binding site" evidence="1">
    <location>
        <position position="79"/>
    </location>
    <ligand>
        <name>5-phospho-alpha-D-ribose 1-diphosphate</name>
        <dbReference type="ChEBI" id="CHEBI:58017"/>
    </ligand>
</feature>
<feature type="binding site" evidence="1">
    <location>
        <position position="104"/>
    </location>
    <ligand>
        <name>5-phospho-alpha-D-ribose 1-diphosphate</name>
        <dbReference type="ChEBI" id="CHEBI:58017"/>
    </ligand>
</feature>
<feature type="binding site" evidence="1">
    <location>
        <begin position="131"/>
        <end position="139"/>
    </location>
    <ligand>
        <name>5-phospho-alpha-D-ribose 1-diphosphate</name>
        <dbReference type="ChEBI" id="CHEBI:58017"/>
    </ligand>
</feature>
<feature type="binding site" evidence="1">
    <location>
        <position position="194"/>
    </location>
    <ligand>
        <name>uracil</name>
        <dbReference type="ChEBI" id="CHEBI:17568"/>
    </ligand>
</feature>
<feature type="binding site" evidence="1">
    <location>
        <begin position="199"/>
        <end position="201"/>
    </location>
    <ligand>
        <name>uracil</name>
        <dbReference type="ChEBI" id="CHEBI:17568"/>
    </ligand>
</feature>
<feature type="binding site" evidence="1">
    <location>
        <position position="200"/>
    </location>
    <ligand>
        <name>5-phospho-alpha-D-ribose 1-diphosphate</name>
        <dbReference type="ChEBI" id="CHEBI:58017"/>
    </ligand>
</feature>
<comment type="function">
    <text evidence="1">Catalyzes the conversion of uracil and 5-phospho-alpha-D-ribose 1-diphosphate (PRPP) to UMP and diphosphate.</text>
</comment>
<comment type="catalytic activity">
    <reaction evidence="1">
        <text>UMP + diphosphate = 5-phospho-alpha-D-ribose 1-diphosphate + uracil</text>
        <dbReference type="Rhea" id="RHEA:13017"/>
        <dbReference type="ChEBI" id="CHEBI:17568"/>
        <dbReference type="ChEBI" id="CHEBI:33019"/>
        <dbReference type="ChEBI" id="CHEBI:57865"/>
        <dbReference type="ChEBI" id="CHEBI:58017"/>
        <dbReference type="EC" id="2.4.2.9"/>
    </reaction>
</comment>
<comment type="cofactor">
    <cofactor evidence="1">
        <name>Mg(2+)</name>
        <dbReference type="ChEBI" id="CHEBI:18420"/>
    </cofactor>
    <text evidence="1">Binds 1 Mg(2+) ion per subunit. The magnesium is bound as Mg-PRPP.</text>
</comment>
<comment type="activity regulation">
    <text evidence="1">Allosterically activated by GTP.</text>
</comment>
<comment type="pathway">
    <text evidence="1">Pyrimidine metabolism; UMP biosynthesis via salvage pathway; UMP from uracil: step 1/1.</text>
</comment>
<comment type="similarity">
    <text evidence="1">Belongs to the UPRTase family.</text>
</comment>
<proteinExistence type="inferred from homology"/>
<protein>
    <recommendedName>
        <fullName evidence="1">Uracil phosphoribosyltransferase</fullName>
        <ecNumber evidence="1">2.4.2.9</ecNumber>
    </recommendedName>
    <alternativeName>
        <fullName evidence="1">UMP pyrophosphorylase</fullName>
    </alternativeName>
    <alternativeName>
        <fullName evidence="1">UPRTase</fullName>
    </alternativeName>
</protein>
<organism>
    <name type="scientific">Lactobacillus delbrueckii subsp. bulgaricus (strain ATCC 11842 / DSM 20081 / BCRC 10696 / JCM 1002 / NBRC 13953 / NCIMB 11778 / NCTC 12712 / WDCM 00102 / Lb 14)</name>
    <dbReference type="NCBI Taxonomy" id="390333"/>
    <lineage>
        <taxon>Bacteria</taxon>
        <taxon>Bacillati</taxon>
        <taxon>Bacillota</taxon>
        <taxon>Bacilli</taxon>
        <taxon>Lactobacillales</taxon>
        <taxon>Lactobacillaceae</taxon>
        <taxon>Lactobacillus</taxon>
    </lineage>
</organism>
<evidence type="ECO:0000255" key="1">
    <source>
        <dbReference type="HAMAP-Rule" id="MF_01218"/>
    </source>
</evidence>